<comment type="function">
    <text evidence="1">Catalyzes the formation of S-adenosylmethionine (AdoMet) from methionine and ATP. The overall synthetic reaction is composed of two sequential steps, AdoMet formation and the subsequent tripolyphosphate hydrolysis which occurs prior to release of AdoMet from the enzyme.</text>
</comment>
<comment type="catalytic activity">
    <reaction evidence="1">
        <text>L-methionine + ATP + H2O = S-adenosyl-L-methionine + phosphate + diphosphate</text>
        <dbReference type="Rhea" id="RHEA:21080"/>
        <dbReference type="ChEBI" id="CHEBI:15377"/>
        <dbReference type="ChEBI" id="CHEBI:30616"/>
        <dbReference type="ChEBI" id="CHEBI:33019"/>
        <dbReference type="ChEBI" id="CHEBI:43474"/>
        <dbReference type="ChEBI" id="CHEBI:57844"/>
        <dbReference type="ChEBI" id="CHEBI:59789"/>
        <dbReference type="EC" id="2.5.1.6"/>
    </reaction>
</comment>
<comment type="cofactor">
    <cofactor evidence="1">
        <name>Mg(2+)</name>
        <dbReference type="ChEBI" id="CHEBI:18420"/>
    </cofactor>
    <text evidence="1">Binds 2 divalent ions per subunit.</text>
</comment>
<comment type="cofactor">
    <cofactor evidence="1">
        <name>K(+)</name>
        <dbReference type="ChEBI" id="CHEBI:29103"/>
    </cofactor>
    <text evidence="1">Binds 1 potassium ion per subunit.</text>
</comment>
<comment type="pathway">
    <text evidence="1">Amino-acid biosynthesis; S-adenosyl-L-methionine biosynthesis; S-adenosyl-L-methionine from L-methionine: step 1/1.</text>
</comment>
<comment type="subunit">
    <text evidence="1">Homotetramer; dimer of dimers.</text>
</comment>
<comment type="subcellular location">
    <subcellularLocation>
        <location evidence="1">Cytoplasm</location>
    </subcellularLocation>
</comment>
<comment type="similarity">
    <text evidence="1">Belongs to the AdoMet synthase family.</text>
</comment>
<organism>
    <name type="scientific">Mycolicibacterium smegmatis (strain ATCC 700084 / mc(2)155)</name>
    <name type="common">Mycobacterium smegmatis</name>
    <dbReference type="NCBI Taxonomy" id="246196"/>
    <lineage>
        <taxon>Bacteria</taxon>
        <taxon>Bacillati</taxon>
        <taxon>Actinomycetota</taxon>
        <taxon>Actinomycetes</taxon>
        <taxon>Mycobacteriales</taxon>
        <taxon>Mycobacteriaceae</taxon>
        <taxon>Mycolicibacterium</taxon>
    </lineage>
</organism>
<feature type="initiator methionine" description="Removed" evidence="2">
    <location>
        <position position="1"/>
    </location>
</feature>
<feature type="chain" id="PRO_0000302941" description="S-adenosylmethionine synthase">
    <location>
        <begin position="2"/>
        <end position="399"/>
    </location>
</feature>
<feature type="region of interest" description="Flexible loop" evidence="1">
    <location>
        <begin position="100"/>
        <end position="110"/>
    </location>
</feature>
<feature type="binding site" description="in other chain" evidence="1">
    <location>
        <position position="16"/>
    </location>
    <ligand>
        <name>ATP</name>
        <dbReference type="ChEBI" id="CHEBI:30616"/>
        <note>ligand shared between two neighboring subunits</note>
    </ligand>
</feature>
<feature type="binding site" evidence="1">
    <location>
        <position position="18"/>
    </location>
    <ligand>
        <name>Mg(2+)</name>
        <dbReference type="ChEBI" id="CHEBI:18420"/>
    </ligand>
</feature>
<feature type="binding site" evidence="1">
    <location>
        <position position="44"/>
    </location>
    <ligand>
        <name>K(+)</name>
        <dbReference type="ChEBI" id="CHEBI:29103"/>
    </ligand>
</feature>
<feature type="binding site" description="in other chain" evidence="1">
    <location>
        <position position="57"/>
    </location>
    <ligand>
        <name>L-methionine</name>
        <dbReference type="ChEBI" id="CHEBI:57844"/>
        <note>ligand shared between two neighboring subunits</note>
    </ligand>
</feature>
<feature type="binding site" description="in other chain" evidence="1">
    <location>
        <position position="100"/>
    </location>
    <ligand>
        <name>L-methionine</name>
        <dbReference type="ChEBI" id="CHEBI:57844"/>
        <note>ligand shared between two neighboring subunits</note>
    </ligand>
</feature>
<feature type="binding site" description="in other chain" evidence="1">
    <location>
        <begin position="175"/>
        <end position="177"/>
    </location>
    <ligand>
        <name>ATP</name>
        <dbReference type="ChEBI" id="CHEBI:30616"/>
        <note>ligand shared between two neighboring subunits</note>
    </ligand>
</feature>
<feature type="binding site" description="in other chain" evidence="1">
    <location>
        <begin position="246"/>
        <end position="247"/>
    </location>
    <ligand>
        <name>ATP</name>
        <dbReference type="ChEBI" id="CHEBI:30616"/>
        <note>ligand shared between two neighboring subunits</note>
    </ligand>
</feature>
<feature type="binding site" evidence="1">
    <location>
        <position position="255"/>
    </location>
    <ligand>
        <name>ATP</name>
        <dbReference type="ChEBI" id="CHEBI:30616"/>
        <note>ligand shared between two neighboring subunits</note>
    </ligand>
</feature>
<feature type="binding site" evidence="1">
    <location>
        <position position="255"/>
    </location>
    <ligand>
        <name>L-methionine</name>
        <dbReference type="ChEBI" id="CHEBI:57844"/>
        <note>ligand shared between two neighboring subunits</note>
    </ligand>
</feature>
<feature type="binding site" description="in other chain" evidence="1">
    <location>
        <begin position="261"/>
        <end position="262"/>
    </location>
    <ligand>
        <name>ATP</name>
        <dbReference type="ChEBI" id="CHEBI:30616"/>
        <note>ligand shared between two neighboring subunits</note>
    </ligand>
</feature>
<feature type="binding site" evidence="1">
    <location>
        <position position="278"/>
    </location>
    <ligand>
        <name>ATP</name>
        <dbReference type="ChEBI" id="CHEBI:30616"/>
        <note>ligand shared between two neighboring subunits</note>
    </ligand>
</feature>
<feature type="binding site" evidence="1">
    <location>
        <position position="282"/>
    </location>
    <ligand>
        <name>ATP</name>
        <dbReference type="ChEBI" id="CHEBI:30616"/>
        <note>ligand shared between two neighboring subunits</note>
    </ligand>
</feature>
<feature type="binding site" description="in other chain" evidence="1">
    <location>
        <position position="286"/>
    </location>
    <ligand>
        <name>L-methionine</name>
        <dbReference type="ChEBI" id="CHEBI:57844"/>
        <note>ligand shared between two neighboring subunits</note>
    </ligand>
</feature>
<feature type="cross-link" description="Isoglutamyl lysine isopeptide (Lys-Gln) (interchain with Q-Cter in protein Pup)" evidence="3">
    <location>
        <position position="341"/>
    </location>
</feature>
<evidence type="ECO:0000255" key="1">
    <source>
        <dbReference type="HAMAP-Rule" id="MF_00086"/>
    </source>
</evidence>
<evidence type="ECO:0000269" key="2">
    <source>
    </source>
</evidence>
<evidence type="ECO:0000269" key="3">
    <source>
    </source>
</evidence>
<reference key="1">
    <citation type="submission" date="2006-10" db="EMBL/GenBank/DDBJ databases">
        <authorList>
            <person name="Fleischmann R.D."/>
            <person name="Dodson R.J."/>
            <person name="Haft D.H."/>
            <person name="Merkel J.S."/>
            <person name="Nelson W.C."/>
            <person name="Fraser C.M."/>
        </authorList>
    </citation>
    <scope>NUCLEOTIDE SEQUENCE [LARGE SCALE GENOMIC DNA]</scope>
    <source>
        <strain>ATCC 700084 / mc(2)155</strain>
    </source>
</reference>
<reference key="2">
    <citation type="journal article" date="2007" name="Genome Biol.">
        <title>Interrupted coding sequences in Mycobacterium smegmatis: authentic mutations or sequencing errors?</title>
        <authorList>
            <person name="Deshayes C."/>
            <person name="Perrodou E."/>
            <person name="Gallien S."/>
            <person name="Euphrasie D."/>
            <person name="Schaeffer C."/>
            <person name="Van-Dorsselaer A."/>
            <person name="Poch O."/>
            <person name="Lecompte O."/>
            <person name="Reyrat J.-M."/>
        </authorList>
    </citation>
    <scope>NUCLEOTIDE SEQUENCE [LARGE SCALE GENOMIC DNA]</scope>
    <source>
        <strain>ATCC 700084 / mc(2)155</strain>
    </source>
</reference>
<reference key="3">
    <citation type="journal article" date="2009" name="Genome Res.">
        <title>Ortho-proteogenomics: multiple proteomes investigation through orthology and a new MS-based protocol.</title>
        <authorList>
            <person name="Gallien S."/>
            <person name="Perrodou E."/>
            <person name="Carapito C."/>
            <person name="Deshayes C."/>
            <person name="Reyrat J.-M."/>
            <person name="Van Dorsselaer A."/>
            <person name="Poch O."/>
            <person name="Schaeffer C."/>
            <person name="Lecompte O."/>
        </authorList>
    </citation>
    <scope>NUCLEOTIDE SEQUENCE [LARGE SCALE GENOMIC DNA]</scope>
    <scope>IDENTIFICATION BY MASS SPECTROMETRY [LARGE SCALE ANALYSIS]</scope>
    <scope>CLEAVAGE OF INITIATOR METHIONINE</scope>
    <source>
        <strain>ATCC 700084 / mc(2)155</strain>
    </source>
</reference>
<reference key="4">
    <citation type="journal article" date="2010" name="Mol. Biosyst.">
        <title>Expansion of the mycobacterial 'PUPylome'.</title>
        <authorList>
            <person name="Watrous J."/>
            <person name="Burns K."/>
            <person name="Liu W.T."/>
            <person name="Patel A."/>
            <person name="Hook V."/>
            <person name="Bafna V."/>
            <person name="Barry C.E. III"/>
            <person name="Bark S."/>
            <person name="Dorrestein P.C."/>
        </authorList>
    </citation>
    <scope>PUPYLATION AT LYS-341</scope>
    <scope>IDENTIFICATION BY MASS SPECTROMETRY</scope>
</reference>
<name>METK_MYCS2</name>
<protein>
    <recommendedName>
        <fullName evidence="1">S-adenosylmethionine synthase</fullName>
        <shortName evidence="1">AdoMet synthase</shortName>
        <ecNumber evidence="1">2.5.1.6</ecNumber>
    </recommendedName>
    <alternativeName>
        <fullName evidence="1">MAT</fullName>
    </alternativeName>
    <alternativeName>
        <fullName evidence="1">Methionine adenosyltransferase</fullName>
    </alternativeName>
</protein>
<sequence length="399" mass="42590">MSKGRLFTSESVTEGHPDKICDAISDSVLDALLEQDPKSRVAVETLVTTGQVHVAGEVTTTAYADIPKIVRDRILDIGYDSSTKGFDGASCGVNVAIGAQSPDIAQGVDTAHETRVEGKADPLDLQGAGDQGLMFGYAIGDTPELMPLPIALAHRLARRLTEVRKNGVLDYLRPDGKTQVTIQYDGTTPVRLDTVVLSTQHADGIDLEGTLTPDIREKVVNTVLADLGHETLDTSDYRLLVNPTGKFVLGGPMGDAGLTGRKIIVDTYGGWARHGGGAFSGKDPSKVDRSAAYAMRWVAKNVVAAGLAERVEVQVAYAIGKAAPVGLFVETFGSETVDPAKIEKAIGEVFDLRPAAIVRDLDLLRPIYAPTAAYGHFGRTDIELPWEQTNKVDDLKSAI</sequence>
<gene>
    <name evidence="1" type="primary">metK</name>
    <name type="ordered locus">MSMEG_3055</name>
    <name type="ordered locus">MSMEI_2979</name>
</gene>
<keyword id="KW-0067">ATP-binding</keyword>
<keyword id="KW-0963">Cytoplasm</keyword>
<keyword id="KW-1017">Isopeptide bond</keyword>
<keyword id="KW-0460">Magnesium</keyword>
<keyword id="KW-0479">Metal-binding</keyword>
<keyword id="KW-0547">Nucleotide-binding</keyword>
<keyword id="KW-0554">One-carbon metabolism</keyword>
<keyword id="KW-0630">Potassium</keyword>
<keyword id="KW-1185">Reference proteome</keyword>
<keyword id="KW-0808">Transferase</keyword>
<keyword id="KW-0832">Ubl conjugation</keyword>
<proteinExistence type="evidence at protein level"/>
<accession>A0QWT3</accession>
<accession>I7FL46</accession>
<dbReference type="EC" id="2.5.1.6" evidence="1"/>
<dbReference type="EMBL" id="CP000480">
    <property type="protein sequence ID" value="ABK70190.1"/>
    <property type="molecule type" value="Genomic_DNA"/>
</dbReference>
<dbReference type="EMBL" id="CP001663">
    <property type="protein sequence ID" value="AFP39443.1"/>
    <property type="molecule type" value="Genomic_DNA"/>
</dbReference>
<dbReference type="RefSeq" id="WP_003894439.1">
    <property type="nucleotide sequence ID" value="NZ_SIJM01000002.1"/>
</dbReference>
<dbReference type="RefSeq" id="YP_887371.1">
    <property type="nucleotide sequence ID" value="NC_008596.1"/>
</dbReference>
<dbReference type="SMR" id="A0QWT3"/>
<dbReference type="STRING" id="246196.MSMEG_3055"/>
<dbReference type="PaxDb" id="246196-MSMEI_2979"/>
<dbReference type="GeneID" id="93457832"/>
<dbReference type="KEGG" id="msb:LJ00_15200"/>
<dbReference type="KEGG" id="msg:MSMEI_2979"/>
<dbReference type="KEGG" id="msm:MSMEG_3055"/>
<dbReference type="PATRIC" id="fig|246196.19.peg.3016"/>
<dbReference type="eggNOG" id="COG0192">
    <property type="taxonomic scope" value="Bacteria"/>
</dbReference>
<dbReference type="OrthoDB" id="9801686at2"/>
<dbReference type="UniPathway" id="UPA00315">
    <property type="reaction ID" value="UER00080"/>
</dbReference>
<dbReference type="Proteomes" id="UP000000757">
    <property type="component" value="Chromosome"/>
</dbReference>
<dbReference type="Proteomes" id="UP000006158">
    <property type="component" value="Chromosome"/>
</dbReference>
<dbReference type="GO" id="GO:0005737">
    <property type="term" value="C:cytoplasm"/>
    <property type="evidence" value="ECO:0007669"/>
    <property type="project" value="UniProtKB-SubCell"/>
</dbReference>
<dbReference type="GO" id="GO:0005524">
    <property type="term" value="F:ATP binding"/>
    <property type="evidence" value="ECO:0007669"/>
    <property type="project" value="UniProtKB-UniRule"/>
</dbReference>
<dbReference type="GO" id="GO:0000287">
    <property type="term" value="F:magnesium ion binding"/>
    <property type="evidence" value="ECO:0007669"/>
    <property type="project" value="UniProtKB-UniRule"/>
</dbReference>
<dbReference type="GO" id="GO:0004478">
    <property type="term" value="F:methionine adenosyltransferase activity"/>
    <property type="evidence" value="ECO:0007669"/>
    <property type="project" value="UniProtKB-UniRule"/>
</dbReference>
<dbReference type="GO" id="GO:0006730">
    <property type="term" value="P:one-carbon metabolic process"/>
    <property type="evidence" value="ECO:0007669"/>
    <property type="project" value="UniProtKB-KW"/>
</dbReference>
<dbReference type="GO" id="GO:0006556">
    <property type="term" value="P:S-adenosylmethionine biosynthetic process"/>
    <property type="evidence" value="ECO:0007669"/>
    <property type="project" value="UniProtKB-UniRule"/>
</dbReference>
<dbReference type="CDD" id="cd18079">
    <property type="entry name" value="S-AdoMet_synt"/>
    <property type="match status" value="1"/>
</dbReference>
<dbReference type="FunFam" id="3.30.300.10:FF:000006">
    <property type="entry name" value="S-adenosylmethionine synthase"/>
    <property type="match status" value="1"/>
</dbReference>
<dbReference type="Gene3D" id="3.30.300.10">
    <property type="match status" value="3"/>
</dbReference>
<dbReference type="HAMAP" id="MF_00086">
    <property type="entry name" value="S_AdoMet_synth1"/>
    <property type="match status" value="1"/>
</dbReference>
<dbReference type="InterPro" id="IPR022631">
    <property type="entry name" value="ADOMET_SYNTHASE_CS"/>
</dbReference>
<dbReference type="InterPro" id="IPR022630">
    <property type="entry name" value="S-AdoMet_synt_C"/>
</dbReference>
<dbReference type="InterPro" id="IPR022629">
    <property type="entry name" value="S-AdoMet_synt_central"/>
</dbReference>
<dbReference type="InterPro" id="IPR022628">
    <property type="entry name" value="S-AdoMet_synt_N"/>
</dbReference>
<dbReference type="InterPro" id="IPR002133">
    <property type="entry name" value="S-AdoMet_synthetase"/>
</dbReference>
<dbReference type="InterPro" id="IPR022636">
    <property type="entry name" value="S-AdoMet_synthetase_sfam"/>
</dbReference>
<dbReference type="NCBIfam" id="TIGR01034">
    <property type="entry name" value="metK"/>
    <property type="match status" value="1"/>
</dbReference>
<dbReference type="PANTHER" id="PTHR11964">
    <property type="entry name" value="S-ADENOSYLMETHIONINE SYNTHETASE"/>
    <property type="match status" value="1"/>
</dbReference>
<dbReference type="Pfam" id="PF02773">
    <property type="entry name" value="S-AdoMet_synt_C"/>
    <property type="match status" value="1"/>
</dbReference>
<dbReference type="Pfam" id="PF02772">
    <property type="entry name" value="S-AdoMet_synt_M"/>
    <property type="match status" value="1"/>
</dbReference>
<dbReference type="Pfam" id="PF00438">
    <property type="entry name" value="S-AdoMet_synt_N"/>
    <property type="match status" value="1"/>
</dbReference>
<dbReference type="PIRSF" id="PIRSF000497">
    <property type="entry name" value="MAT"/>
    <property type="match status" value="1"/>
</dbReference>
<dbReference type="SUPFAM" id="SSF55973">
    <property type="entry name" value="S-adenosylmethionine synthetase"/>
    <property type="match status" value="3"/>
</dbReference>
<dbReference type="PROSITE" id="PS00376">
    <property type="entry name" value="ADOMET_SYNTHASE_1"/>
    <property type="match status" value="1"/>
</dbReference>
<dbReference type="PROSITE" id="PS00377">
    <property type="entry name" value="ADOMET_SYNTHASE_2"/>
    <property type="match status" value="1"/>
</dbReference>